<feature type="chain" id="PRO_0000437160" description="Fatty acid synthase apf5">
    <location>
        <begin position="1"/>
        <end position="1606"/>
    </location>
</feature>
<feature type="domain" description="Carrier" evidence="1">
    <location>
        <begin position="142"/>
        <end position="218"/>
    </location>
</feature>
<feature type="domain" description="Ketosynthase family 3 (KS3)" evidence="2">
    <location>
        <begin position="996"/>
        <end position="1539"/>
    </location>
</feature>
<feature type="active site" description="For beta-ketoacyl synthase activity" evidence="2">
    <location>
        <position position="1182"/>
    </location>
</feature>
<feature type="active site" description="For beta-ketoacyl synthase activity" evidence="2">
    <location>
        <position position="1424"/>
    </location>
</feature>
<feature type="active site" description="For beta-ketoacyl synthase activity" evidence="2">
    <location>
        <position position="1465"/>
    </location>
</feature>
<feature type="modified residue" description="O-(pantetheine 4'-phosphoryl)serine" evidence="1">
    <location>
        <position position="177"/>
    </location>
</feature>
<organism>
    <name type="scientific">Gibberella fujikuroi (strain CBS 195.34 / IMI 58289 / NRRL A-6831)</name>
    <name type="common">Bakanae and foot rot disease fungus</name>
    <name type="synonym">Fusarium fujikuroi</name>
    <dbReference type="NCBI Taxonomy" id="1279085"/>
    <lineage>
        <taxon>Eukaryota</taxon>
        <taxon>Fungi</taxon>
        <taxon>Dikarya</taxon>
        <taxon>Ascomycota</taxon>
        <taxon>Pezizomycotina</taxon>
        <taxon>Sordariomycetes</taxon>
        <taxon>Hypocreomycetidae</taxon>
        <taxon>Hypocreales</taxon>
        <taxon>Nectriaceae</taxon>
        <taxon>Fusarium</taxon>
        <taxon>Fusarium fujikuroi species complex</taxon>
    </lineage>
</organism>
<dbReference type="EC" id="2.3.1.41" evidence="3 8"/>
<dbReference type="EMBL" id="HF679023">
    <property type="protein sequence ID" value="CCT63354.1"/>
    <property type="molecule type" value="Genomic_DNA"/>
</dbReference>
<dbReference type="SMR" id="S0DL59"/>
<dbReference type="STRING" id="1279085.S0DL59"/>
<dbReference type="EnsemblFungi" id="CCT63354">
    <property type="protein sequence ID" value="CCT63354"/>
    <property type="gene ID" value="FFUJ_00010"/>
</dbReference>
<dbReference type="VEuPathDB" id="FungiDB:FFUJ_00010"/>
<dbReference type="HOGENOM" id="CLU_000114_0_0_1"/>
<dbReference type="Proteomes" id="UP000016800">
    <property type="component" value="Chromosome 1"/>
</dbReference>
<dbReference type="GO" id="GO:0005835">
    <property type="term" value="C:fatty acid synthase complex"/>
    <property type="evidence" value="ECO:0007669"/>
    <property type="project" value="InterPro"/>
</dbReference>
<dbReference type="GO" id="GO:0004316">
    <property type="term" value="F:3-oxoacyl-[acyl-carrier-protein] reductase (NADPH) activity"/>
    <property type="evidence" value="ECO:0007669"/>
    <property type="project" value="InterPro"/>
</dbReference>
<dbReference type="GO" id="GO:0004315">
    <property type="term" value="F:3-oxoacyl-[acyl-carrier-protein] synthase activity"/>
    <property type="evidence" value="ECO:0007669"/>
    <property type="project" value="UniProtKB-EC"/>
</dbReference>
<dbReference type="GO" id="GO:0004312">
    <property type="term" value="F:fatty acid synthase activity"/>
    <property type="evidence" value="ECO:0007669"/>
    <property type="project" value="InterPro"/>
</dbReference>
<dbReference type="GO" id="GO:0008897">
    <property type="term" value="F:holo-[acyl-carrier-protein] synthase activity"/>
    <property type="evidence" value="ECO:0007669"/>
    <property type="project" value="InterPro"/>
</dbReference>
<dbReference type="GO" id="GO:0042759">
    <property type="term" value="P:long-chain fatty acid biosynthetic process"/>
    <property type="evidence" value="ECO:0007669"/>
    <property type="project" value="InterPro"/>
</dbReference>
<dbReference type="CDD" id="cd00828">
    <property type="entry name" value="elong_cond_enzymes"/>
    <property type="match status" value="1"/>
</dbReference>
<dbReference type="CDD" id="cd08950">
    <property type="entry name" value="KR_fFAS_SDR_c_like"/>
    <property type="match status" value="1"/>
</dbReference>
<dbReference type="FunFam" id="3.90.25.70:FF:000001">
    <property type="entry name" value="Fatty acid synthase subunit alpha"/>
    <property type="match status" value="1"/>
</dbReference>
<dbReference type="Gene3D" id="3.30.70.2490">
    <property type="match status" value="1"/>
</dbReference>
<dbReference type="Gene3D" id="3.40.47.10">
    <property type="match status" value="1"/>
</dbReference>
<dbReference type="Gene3D" id="3.90.25.70">
    <property type="match status" value="1"/>
</dbReference>
<dbReference type="Gene3D" id="6.10.140.1410">
    <property type="match status" value="1"/>
</dbReference>
<dbReference type="Gene3D" id="3.40.50.720">
    <property type="entry name" value="NAD(P)-binding Rossmann-like Domain"/>
    <property type="match status" value="2"/>
</dbReference>
<dbReference type="InterPro" id="IPR016035">
    <property type="entry name" value="Acyl_Trfase/lysoPLipase"/>
</dbReference>
<dbReference type="InterPro" id="IPR040899">
    <property type="entry name" value="Fas_alpha_ACP"/>
</dbReference>
<dbReference type="InterPro" id="IPR047224">
    <property type="entry name" value="FAS_alpha_su_C"/>
</dbReference>
<dbReference type="InterPro" id="IPR026025">
    <property type="entry name" value="FAS_alpha_yeast"/>
</dbReference>
<dbReference type="InterPro" id="IPR041550">
    <property type="entry name" value="FASI_helical"/>
</dbReference>
<dbReference type="InterPro" id="IPR050830">
    <property type="entry name" value="Fungal_FAS"/>
</dbReference>
<dbReference type="InterPro" id="IPR018201">
    <property type="entry name" value="Ketoacyl_synth_AS"/>
</dbReference>
<dbReference type="InterPro" id="IPR014031">
    <property type="entry name" value="Ketoacyl_synth_C"/>
</dbReference>
<dbReference type="InterPro" id="IPR014030">
    <property type="entry name" value="Ketoacyl_synth_N"/>
</dbReference>
<dbReference type="InterPro" id="IPR036291">
    <property type="entry name" value="NAD(P)-bd_dom_sf"/>
</dbReference>
<dbReference type="InterPro" id="IPR020841">
    <property type="entry name" value="PKS_Beta-ketoAc_synthase_dom"/>
</dbReference>
<dbReference type="InterPro" id="IPR009081">
    <property type="entry name" value="PP-bd_ACP"/>
</dbReference>
<dbReference type="InterPro" id="IPR016039">
    <property type="entry name" value="Thiolase-like"/>
</dbReference>
<dbReference type="PANTHER" id="PTHR10982:SF21">
    <property type="entry name" value="FATTY ACID SYNTHASE SUBUNIT BETA"/>
    <property type="match status" value="1"/>
</dbReference>
<dbReference type="PANTHER" id="PTHR10982">
    <property type="entry name" value="MALONYL COA-ACYL CARRIER PROTEIN TRANSACYLASE"/>
    <property type="match status" value="1"/>
</dbReference>
<dbReference type="Pfam" id="PF18325">
    <property type="entry name" value="Fas_alpha_ACP"/>
    <property type="match status" value="1"/>
</dbReference>
<dbReference type="Pfam" id="PF18314">
    <property type="entry name" value="FAS_I_H"/>
    <property type="match status" value="1"/>
</dbReference>
<dbReference type="Pfam" id="PF00109">
    <property type="entry name" value="ketoacyl-synt"/>
    <property type="match status" value="1"/>
</dbReference>
<dbReference type="Pfam" id="PF02801">
    <property type="entry name" value="Ketoacyl-synt_C"/>
    <property type="match status" value="1"/>
</dbReference>
<dbReference type="PIRSF" id="PIRSF000454">
    <property type="entry name" value="FAS_yeast_alpha"/>
    <property type="match status" value="1"/>
</dbReference>
<dbReference type="SUPFAM" id="SSF52151">
    <property type="entry name" value="FabD/lysophospholipase-like"/>
    <property type="match status" value="1"/>
</dbReference>
<dbReference type="SUPFAM" id="SSF51735">
    <property type="entry name" value="NAD(P)-binding Rossmann-fold domains"/>
    <property type="match status" value="1"/>
</dbReference>
<dbReference type="SUPFAM" id="SSF53901">
    <property type="entry name" value="Thiolase-like"/>
    <property type="match status" value="2"/>
</dbReference>
<dbReference type="PROSITE" id="PS50075">
    <property type="entry name" value="CARRIER"/>
    <property type="match status" value="1"/>
</dbReference>
<dbReference type="PROSITE" id="PS00606">
    <property type="entry name" value="KS3_1"/>
    <property type="match status" value="1"/>
</dbReference>
<dbReference type="PROSITE" id="PS52004">
    <property type="entry name" value="KS3_2"/>
    <property type="match status" value="1"/>
</dbReference>
<name>APF5_GIBF5</name>
<proteinExistence type="evidence at protein level"/>
<protein>
    <recommendedName>
        <fullName evidence="6">Fatty acid synthase apf5</fullName>
        <ecNumber evidence="3 8">2.3.1.41</ecNumber>
    </recommendedName>
    <alternativeName>
        <fullName evidence="6">Apicidin F synthesis protein 5</fullName>
    </alternativeName>
</protein>
<keyword id="KW-0596">Phosphopantetheine</keyword>
<keyword id="KW-0597">Phosphoprotein</keyword>
<keyword id="KW-1185">Reference proteome</keyword>
<keyword id="KW-0808">Transferase</keyword>
<evidence type="ECO:0000255" key="1">
    <source>
        <dbReference type="PROSITE-ProRule" id="PRU00258"/>
    </source>
</evidence>
<evidence type="ECO:0000255" key="2">
    <source>
        <dbReference type="PROSITE-ProRule" id="PRU01348"/>
    </source>
</evidence>
<evidence type="ECO:0000255" key="3">
    <source>
        <dbReference type="PROSITE-ProRule" id="PRU10022"/>
    </source>
</evidence>
<evidence type="ECO:0000269" key="4">
    <source>
    </source>
</evidence>
<evidence type="ECO:0000269" key="5">
    <source>
    </source>
</evidence>
<evidence type="ECO:0000303" key="6">
    <source>
    </source>
</evidence>
<evidence type="ECO:0000305" key="7"/>
<evidence type="ECO:0000305" key="8">
    <source>
    </source>
</evidence>
<reference key="1">
    <citation type="journal article" date="2013" name="PLoS Pathog.">
        <title>Deciphering the cryptic genome: genome-wide analyses of the rice pathogen Fusarium fujikuroi reveal complex regulation of secondary metabolism and novel metabolites.</title>
        <authorList>
            <person name="Wiemann P."/>
            <person name="Sieber C.M.K."/>
            <person name="von Bargen K.W."/>
            <person name="Studt L."/>
            <person name="Niehaus E.-M."/>
            <person name="Espino J.J."/>
            <person name="Huss K."/>
            <person name="Michielse C.B."/>
            <person name="Albermann S."/>
            <person name="Wagner D."/>
            <person name="Bergner S.V."/>
            <person name="Connolly L.R."/>
            <person name="Fischer A."/>
            <person name="Reuter G."/>
            <person name="Kleigrewe K."/>
            <person name="Bald T."/>
            <person name="Wingfield B.D."/>
            <person name="Ophir R."/>
            <person name="Freeman S."/>
            <person name="Hippler M."/>
            <person name="Smith K.M."/>
            <person name="Brown D.W."/>
            <person name="Proctor R.H."/>
            <person name="Muensterkoetter M."/>
            <person name="Freitag M."/>
            <person name="Humpf H.-U."/>
            <person name="Gueldener U."/>
            <person name="Tudzynski B."/>
        </authorList>
    </citation>
    <scope>NUCLEOTIDE SEQUENCE [LARGE SCALE GENOMIC DNA]</scope>
    <source>
        <strain>CBS 195.34 / IMI 58289 / NRRL A-6831</strain>
    </source>
</reference>
<reference key="2">
    <citation type="journal article" date="2013" name="J. Nat. Prod.">
        <title>Structure elucidation and antimalarial activity of apicidin F: an apicidin-like compound produced by Fusarium fujikuroi.</title>
        <authorList>
            <person name="von Bargen K.W."/>
            <person name="Niehaus E.M."/>
            <person name="Bergander K."/>
            <person name="Brun R."/>
            <person name="Tudzynski B."/>
            <person name="Humpf H.U."/>
        </authorList>
    </citation>
    <scope>FUNCTION</scope>
    <scope>BIOTECHNOLOGY</scope>
</reference>
<reference key="3">
    <citation type="journal article" date="2014" name="PLoS ONE">
        <title>Apicidin F: characterization and genetic manipulation of a new secondary metabolite gene cluster in the rice pathogen Fusarium fujikuroi.</title>
        <authorList>
            <person name="Niehaus E.M."/>
            <person name="Janevska S."/>
            <person name="von Bargen K.W."/>
            <person name="Sieber C.M."/>
            <person name="Harrer H."/>
            <person name="Humpf H.U."/>
            <person name="Tudzynski B."/>
        </authorList>
    </citation>
    <scope>FUNCTION</scope>
    <scope>INDUCTION</scope>
</reference>
<sequence>MHPDVEQELAYTLLIELMAHQFAYPVRWIETQDHILGEVNAERIIEIGPSPILTNMMKRTIASRFSNSDQALNINRHLMSPDNGNPDIYYKYEPTEEPDLPELGSQSNTVKVSGSPAWEVQRPVTASHIPSGPVDEIEDTKVPVSAILISLLAPKLKKDPRAIPMTGTISNLVGGRSTLSNEIVGDLLAEFPNRVPDKPEEMPLSSLSETLSTSHDGQLGKATSALVMKMVSSRLPGGYSLSNARLYLREKWGLPPRRQDAVFLLALQRQPTSRLLSSTDVDSFLDANAAAYFGQENLSIPSRGSVQSAAPAVDAKALLLAKQQNDALLRDIMGVIQGHTAAKNESQDATLQASDSEAAATKKLDMWISEHGDDYAKGMAPIFDAKKQRIYDSYWNWNAQDTILLFQRKLQGQMSSVKELEQLSTSIVNRACGRTLEQLDYIIAQAERDPTVDSGLLKPMQLLRQTCVETQERQPVFINLSPDMAPLTTISSDGRLIFSEIPRALPCSKILSTNEASSIAFPVSRADGVAVSYSPQLTEILCHDLKDSRRSGFSFSGKNVLLTGAGEGSIGNHILRHLLAGGARVTVTTSSFSEKVTAMFQSIYARHGSKGSVLRVVPFNQGSHGDVQNLVKYIYADASWDLDFILPFAAISENGRDIEDLDSKSEIAHRAMLTNLVRLVGAVASQKRQRDTITRPATVVLPLSPNHGLLGNDGLYSESKRSLETLIPKWSSETWGSYIALAGVIIGWTRGTGLMDSNDVIAQAVESLGVRTFSAVEMAANIVSVMGGRFNAECQETPIIVDMGGGLGSVKNFKAKLTSARQELNAYAELKRLTAQESSRDKAYVATDAHAKTSKRLRGRANILLPLPKNLNYEVDIAPFAASLDGMVDLSRVVVITGFAELGPLGNSRTRWEMEESGTLSLEGCVEMAWLMGLITYHNGIDKKGDHYSGWVDTKTSDAICDDEIPGKYLEFMAKHSGIREVEPEISDNGYDPSKKESLIEVALQRDLAPFETSIETAETLKRQHGDKAIVTQDASSGNCQVQLKAGAVVMVPRASRFNRTVAGQIPLGWTAKRYGISDDIIEQVDPVTLFSLVCTVEALLCSGIIDPYEFYQHIHVSQFANCLGSSMGGLTSLRKMHRDRYLDRSVKSDLVQETFINTTGAWINMLLSSSSGPIRTPVGACASSLESLDTACDLIMLKKAKVCLVGGFEDFVEDLSYEFGCMKATCDTDAEYAAGRVPKEMSRPTASSRSGFVESQGCGVQVLTSAELALEMGLPIFGIVAYTSMAADKAGRSVPAPGKGVLTNAREKSTIPNPMLSLGYRKRLLELRRTQIYQNISDHLDILNSEIALFQESETASPGDLKAFRENRELRIRQDAQAQDAEVTFSLGNQFWKSQDAGDISPIRGSLAVWGLGIDDISVASLHGTSTVQNDLNETMVIQEQMKHLGRRQGNLLPCVCQKWLTGHSKGAAGAWMVNGCLQMMNTGLVPGNRNADNVDEKLREHRHLAFPNTNLQMDDIKACSVTSFGFGQKGGQALLVHPRYLFATIGRERYDGYISKRDKRWRKACFRLSEAMVQGNMVSKCIKTEAPYTSADGVAALLDPTARF</sequence>
<accession>S0DL59</accession>
<comment type="function">
    <text evidence="4 5">Fatty acid synthase; part of the gene cluster that mediates the biosynthesis of the cyclic tetrapeptide apicidin F (APF) (PubMed:25058475). The non-ribosomal peptide synthetase apf1 incorporates four different amino acids to produce apicidin F: L-phenylalanine, D-pipecolic acid (D-pip), N-methoxy-L-tryptophan and L-2-aminooctanedioic acid (PubMed:25058475). L-Phenylalanine is the only proteinogenic amino acid directly used by apf1 (PubMed:24195442, PubMed:25058475). The 3 other apf1 substrates are non-proteinogenic and have to be modified by other enzymes of the cluster (PubMed:25058475). Lysine is converted to delta-1-pyrroline-5-carboxylate (P5C) which is reduced to L-pipecolic acid (L-pip) by apf3 (PubMed:25058475). L-pip is epimerized to D-pip, probably by apf1 activity, prior to incorporation (PubMed:25058475). L-Tryptophan is N-oxidyzed by one of the cytochrome P450 monooxygenases (apf7 or apf8), and further methylated at the hydroxy group by the O-methyltransferase apf6 to yield N-methoxy-L-tryptophan (PubMed:25058475). The synthesis of the fourth apf1 substrate is more complex (PubMed:25058475). The fatty acid synthase apf5 is involved in the synthesis of the octanoic acid backbone of L-2-aminooctanedioic acid by fixing one acetyl-CoA unit and three malonyl-CoA units (PubMed:25058475). Then one of the cytochrome P450 monooxygenases (apf7 or apf8) may oxidize this backbone to 2-oxooctanoic acid (PubMed:25058475). The aminotransferase apf4 is predicted to catalyze the exchange of the keto group with an amino group (PubMed:25058475). The next step would be the oxidation of 2-aminooctanoic acid by one of the cytochrome P450 monooxygenases (apf7 or apf8). The last step is the oxidation of 2-amino-8-hydroxyoctanoic acid to 2-aminooctanedioic acid is catalyzed by the FAD-dependent monooxygenase apf9 (PubMed:25058475).</text>
</comment>
<comment type="catalytic activity">
    <reaction evidence="3 8">
        <text>a fatty acyl-[ACP] + malonyl-[ACP] + H(+) = a 3-oxoacyl-[ACP] + holo-[ACP] + CO2</text>
        <dbReference type="Rhea" id="RHEA:22836"/>
        <dbReference type="Rhea" id="RHEA-COMP:9623"/>
        <dbReference type="Rhea" id="RHEA-COMP:9685"/>
        <dbReference type="Rhea" id="RHEA-COMP:9916"/>
        <dbReference type="Rhea" id="RHEA-COMP:14125"/>
        <dbReference type="ChEBI" id="CHEBI:15378"/>
        <dbReference type="ChEBI" id="CHEBI:16526"/>
        <dbReference type="ChEBI" id="CHEBI:64479"/>
        <dbReference type="ChEBI" id="CHEBI:78449"/>
        <dbReference type="ChEBI" id="CHEBI:78776"/>
        <dbReference type="ChEBI" id="CHEBI:138651"/>
        <dbReference type="EC" id="2.3.1.41"/>
    </reaction>
</comment>
<comment type="pathway">
    <text evidence="5">Secondary metabolite biosynthesis.</text>
</comment>
<comment type="induction">
    <text evidence="5">Expression is positively regulated by the apicidin F cluster-specific transcription factor apf2 that binds to the eight-base-pair motif 5'-TGACGTGA-3' called the 'Api-box' that is found in all promoters of the apicidin F cluster except in the promoter region of apf2 itself (PubMed:25058475).</text>
</comment>
<comment type="biotechnology">
    <text evidence="4">Apicidin F, like the other known apicidins, is a cyclic tetrapeptides with anti-malarial properties via histone deacetylase inhibitory activity (PubMed:24195442).</text>
</comment>
<comment type="similarity">
    <text evidence="7">Belongs to the thiolase-like superfamily. Fungal fatty acid synthetase subunit alpha family.</text>
</comment>
<gene>
    <name evidence="6" type="primary">apf5</name>
    <name type="ORF">FFUJ_00010</name>
</gene>